<reference key="1">
    <citation type="journal article" date="2009" name="Proc. Natl. Acad. Sci. U.S.A.">
        <title>Biogeography of the Sulfolobus islandicus pan-genome.</title>
        <authorList>
            <person name="Reno M.L."/>
            <person name="Held N.L."/>
            <person name="Fields C.J."/>
            <person name="Burke P.V."/>
            <person name="Whitaker R.J."/>
        </authorList>
    </citation>
    <scope>NUCLEOTIDE SEQUENCE [LARGE SCALE GENOMIC DNA]</scope>
    <source>
        <strain>Y.N.15.51 / Yellowstone #2</strain>
    </source>
</reference>
<organism>
    <name type="scientific">Saccharolobus islandicus (strain Y.N.15.51 / Yellowstone #2)</name>
    <name type="common">Sulfolobus islandicus</name>
    <dbReference type="NCBI Taxonomy" id="419942"/>
    <lineage>
        <taxon>Archaea</taxon>
        <taxon>Thermoproteota</taxon>
        <taxon>Thermoprotei</taxon>
        <taxon>Sulfolobales</taxon>
        <taxon>Sulfolobaceae</taxon>
        <taxon>Saccharolobus</taxon>
    </lineage>
</organism>
<feature type="chain" id="PRO_1000202146" description="Elongation factor 1-beta">
    <location>
        <begin position="1"/>
        <end position="91"/>
    </location>
</feature>
<gene>
    <name evidence="1" type="primary">ef1b</name>
    <name type="ordered locus">YN1551_0836</name>
</gene>
<protein>
    <recommendedName>
        <fullName evidence="1">Elongation factor 1-beta</fullName>
        <shortName evidence="1">EF-1-beta</shortName>
    </recommendedName>
    <alternativeName>
        <fullName evidence="1">aEF-1beta</fullName>
    </alternativeName>
</protein>
<comment type="function">
    <text evidence="1">Promotes the exchange of GDP for GTP in EF-1-alpha/GDP, thus allowing the regeneration of EF-1-alpha/GTP that could then be used to form the ternary complex EF-1-alpha/GTP/AAtRNA.</text>
</comment>
<comment type="similarity">
    <text evidence="1">Belongs to the EF-1-beta/EF-1-delta family.</text>
</comment>
<proteinExistence type="inferred from homology"/>
<keyword id="KW-0251">Elongation factor</keyword>
<keyword id="KW-0648">Protein biosynthesis</keyword>
<evidence type="ECO:0000255" key="1">
    <source>
        <dbReference type="HAMAP-Rule" id="MF_00043"/>
    </source>
</evidence>
<dbReference type="EMBL" id="CP001404">
    <property type="protein sequence ID" value="ACP47958.1"/>
    <property type="molecule type" value="Genomic_DNA"/>
</dbReference>
<dbReference type="RefSeq" id="WP_012711931.1">
    <property type="nucleotide sequence ID" value="NC_012623.1"/>
</dbReference>
<dbReference type="SMR" id="C3NF62"/>
<dbReference type="KEGG" id="sin:YN1551_0836"/>
<dbReference type="HOGENOM" id="CLU_165896_1_0_2"/>
<dbReference type="Proteomes" id="UP000006818">
    <property type="component" value="Chromosome"/>
</dbReference>
<dbReference type="GO" id="GO:0003746">
    <property type="term" value="F:translation elongation factor activity"/>
    <property type="evidence" value="ECO:0007669"/>
    <property type="project" value="UniProtKB-UniRule"/>
</dbReference>
<dbReference type="CDD" id="cd00292">
    <property type="entry name" value="EF1B"/>
    <property type="match status" value="1"/>
</dbReference>
<dbReference type="Gene3D" id="3.30.70.60">
    <property type="match status" value="1"/>
</dbReference>
<dbReference type="HAMAP" id="MF_00043">
    <property type="entry name" value="EF1_beta"/>
    <property type="match status" value="1"/>
</dbReference>
<dbReference type="InterPro" id="IPR036219">
    <property type="entry name" value="eEF-1beta-like_sf"/>
</dbReference>
<dbReference type="InterPro" id="IPR014038">
    <property type="entry name" value="EF1B_bsu/dsu_GNE"/>
</dbReference>
<dbReference type="InterPro" id="IPR014717">
    <property type="entry name" value="Transl_elong_EF1B/ribsomal_bS6"/>
</dbReference>
<dbReference type="InterPro" id="IPR004542">
    <property type="entry name" value="Transl_elong_EF1B_B_arc"/>
</dbReference>
<dbReference type="NCBIfam" id="TIGR00489">
    <property type="entry name" value="aEF-1_beta"/>
    <property type="match status" value="1"/>
</dbReference>
<dbReference type="NCBIfam" id="NF001670">
    <property type="entry name" value="PRK00435.1"/>
    <property type="match status" value="1"/>
</dbReference>
<dbReference type="PANTHER" id="PTHR39647">
    <property type="entry name" value="ELONGATION FACTOR 1-BETA"/>
    <property type="match status" value="1"/>
</dbReference>
<dbReference type="PANTHER" id="PTHR39647:SF1">
    <property type="entry name" value="ELONGATION FACTOR 1-BETA"/>
    <property type="match status" value="1"/>
</dbReference>
<dbReference type="Pfam" id="PF00736">
    <property type="entry name" value="EF1_GNE"/>
    <property type="match status" value="1"/>
</dbReference>
<dbReference type="PIRSF" id="PIRSF006521">
    <property type="entry name" value="Transl_elong_EF1B_B_arc"/>
    <property type="match status" value="1"/>
</dbReference>
<dbReference type="SMART" id="SM00888">
    <property type="entry name" value="EF1_GNE"/>
    <property type="match status" value="1"/>
</dbReference>
<dbReference type="SUPFAM" id="SSF54984">
    <property type="entry name" value="eEF-1beta-like"/>
    <property type="match status" value="1"/>
</dbReference>
<name>EF1B_SACI1</name>
<accession>C3NF62</accession>
<sequence length="91" mass="10192">MTDVLVVLKVFPDSDEVNLDNLYTDISNKLPKEYRIIRKETEPIAFGLNALILYVQMPEQTEGGTDNLEEVVNNIQGVSHAEVVGITRLGF</sequence>